<keyword id="KW-0479">Metal-binding</keyword>
<keyword id="KW-1185">Reference proteome</keyword>
<keyword id="KW-0862">Zinc</keyword>
<protein>
    <recommendedName>
        <fullName>MOB kinase activator 3A</fullName>
    </recommendedName>
    <alternativeName>
        <fullName>Mob1 homolog 2A</fullName>
    </alternativeName>
    <alternativeName>
        <fullName>Mps one binder kinase activator-like 2A</fullName>
    </alternativeName>
</protein>
<organism>
    <name type="scientific">Mus musculus</name>
    <name type="common">Mouse</name>
    <dbReference type="NCBI Taxonomy" id="10090"/>
    <lineage>
        <taxon>Eukaryota</taxon>
        <taxon>Metazoa</taxon>
        <taxon>Chordata</taxon>
        <taxon>Craniata</taxon>
        <taxon>Vertebrata</taxon>
        <taxon>Euteleostomi</taxon>
        <taxon>Mammalia</taxon>
        <taxon>Eutheria</taxon>
        <taxon>Euarchontoglires</taxon>
        <taxon>Glires</taxon>
        <taxon>Rodentia</taxon>
        <taxon>Myomorpha</taxon>
        <taxon>Muroidea</taxon>
        <taxon>Muridae</taxon>
        <taxon>Murinae</taxon>
        <taxon>Mus</taxon>
        <taxon>Mus</taxon>
    </lineage>
</organism>
<sequence>MSNPFLKQVFNKDKTFRPKRKFEPGTQRFELHKRAQASLNAGLDLRLAVQLPPGEDLNDWVAVHVVDFFNRINLIYGTISDGCTEQSCPVMSGGPKYEYRWQDEQRFRKPTALSAPRYMDLLMDWIEVQINNEDIFPTNVGTPFPKTFLQAVRKILSRLFRVFVHVYIHHFDRIAQMGSEAHVNTCYKHFYYFVTEFNLIDPKELEPLKEMTSRMCH</sequence>
<comment type="function">
    <text evidence="1">May regulate the activity of kinases.</text>
</comment>
<comment type="similarity">
    <text evidence="2">Belongs to the MOB1/phocein family.</text>
</comment>
<gene>
    <name type="primary">Mob3a</name>
    <name type="synonym">Mobkl2a</name>
</gene>
<reference key="1">
    <citation type="journal article" date="2005" name="Science">
        <title>The transcriptional landscape of the mammalian genome.</title>
        <authorList>
            <person name="Carninci P."/>
            <person name="Kasukawa T."/>
            <person name="Katayama S."/>
            <person name="Gough J."/>
            <person name="Frith M.C."/>
            <person name="Maeda N."/>
            <person name="Oyama R."/>
            <person name="Ravasi T."/>
            <person name="Lenhard B."/>
            <person name="Wells C."/>
            <person name="Kodzius R."/>
            <person name="Shimokawa K."/>
            <person name="Bajic V.B."/>
            <person name="Brenner S.E."/>
            <person name="Batalov S."/>
            <person name="Forrest A.R."/>
            <person name="Zavolan M."/>
            <person name="Davis M.J."/>
            <person name="Wilming L.G."/>
            <person name="Aidinis V."/>
            <person name="Allen J.E."/>
            <person name="Ambesi-Impiombato A."/>
            <person name="Apweiler R."/>
            <person name="Aturaliya R.N."/>
            <person name="Bailey T.L."/>
            <person name="Bansal M."/>
            <person name="Baxter L."/>
            <person name="Beisel K.W."/>
            <person name="Bersano T."/>
            <person name="Bono H."/>
            <person name="Chalk A.M."/>
            <person name="Chiu K.P."/>
            <person name="Choudhary V."/>
            <person name="Christoffels A."/>
            <person name="Clutterbuck D.R."/>
            <person name="Crowe M.L."/>
            <person name="Dalla E."/>
            <person name="Dalrymple B.P."/>
            <person name="de Bono B."/>
            <person name="Della Gatta G."/>
            <person name="di Bernardo D."/>
            <person name="Down T."/>
            <person name="Engstrom P."/>
            <person name="Fagiolini M."/>
            <person name="Faulkner G."/>
            <person name="Fletcher C.F."/>
            <person name="Fukushima T."/>
            <person name="Furuno M."/>
            <person name="Futaki S."/>
            <person name="Gariboldi M."/>
            <person name="Georgii-Hemming P."/>
            <person name="Gingeras T.R."/>
            <person name="Gojobori T."/>
            <person name="Green R.E."/>
            <person name="Gustincich S."/>
            <person name="Harbers M."/>
            <person name="Hayashi Y."/>
            <person name="Hensch T.K."/>
            <person name="Hirokawa N."/>
            <person name="Hill D."/>
            <person name="Huminiecki L."/>
            <person name="Iacono M."/>
            <person name="Ikeo K."/>
            <person name="Iwama A."/>
            <person name="Ishikawa T."/>
            <person name="Jakt M."/>
            <person name="Kanapin A."/>
            <person name="Katoh M."/>
            <person name="Kawasawa Y."/>
            <person name="Kelso J."/>
            <person name="Kitamura H."/>
            <person name="Kitano H."/>
            <person name="Kollias G."/>
            <person name="Krishnan S.P."/>
            <person name="Kruger A."/>
            <person name="Kummerfeld S.K."/>
            <person name="Kurochkin I.V."/>
            <person name="Lareau L.F."/>
            <person name="Lazarevic D."/>
            <person name="Lipovich L."/>
            <person name="Liu J."/>
            <person name="Liuni S."/>
            <person name="McWilliam S."/>
            <person name="Madan Babu M."/>
            <person name="Madera M."/>
            <person name="Marchionni L."/>
            <person name="Matsuda H."/>
            <person name="Matsuzawa S."/>
            <person name="Miki H."/>
            <person name="Mignone F."/>
            <person name="Miyake S."/>
            <person name="Morris K."/>
            <person name="Mottagui-Tabar S."/>
            <person name="Mulder N."/>
            <person name="Nakano N."/>
            <person name="Nakauchi H."/>
            <person name="Ng P."/>
            <person name="Nilsson R."/>
            <person name="Nishiguchi S."/>
            <person name="Nishikawa S."/>
            <person name="Nori F."/>
            <person name="Ohara O."/>
            <person name="Okazaki Y."/>
            <person name="Orlando V."/>
            <person name="Pang K.C."/>
            <person name="Pavan W.J."/>
            <person name="Pavesi G."/>
            <person name="Pesole G."/>
            <person name="Petrovsky N."/>
            <person name="Piazza S."/>
            <person name="Reed J."/>
            <person name="Reid J.F."/>
            <person name="Ring B.Z."/>
            <person name="Ringwald M."/>
            <person name="Rost B."/>
            <person name="Ruan Y."/>
            <person name="Salzberg S.L."/>
            <person name="Sandelin A."/>
            <person name="Schneider C."/>
            <person name="Schoenbach C."/>
            <person name="Sekiguchi K."/>
            <person name="Semple C.A."/>
            <person name="Seno S."/>
            <person name="Sessa L."/>
            <person name="Sheng Y."/>
            <person name="Shibata Y."/>
            <person name="Shimada H."/>
            <person name="Shimada K."/>
            <person name="Silva D."/>
            <person name="Sinclair B."/>
            <person name="Sperling S."/>
            <person name="Stupka E."/>
            <person name="Sugiura K."/>
            <person name="Sultana R."/>
            <person name="Takenaka Y."/>
            <person name="Taki K."/>
            <person name="Tammoja K."/>
            <person name="Tan S.L."/>
            <person name="Tang S."/>
            <person name="Taylor M.S."/>
            <person name="Tegner J."/>
            <person name="Teichmann S.A."/>
            <person name="Ueda H.R."/>
            <person name="van Nimwegen E."/>
            <person name="Verardo R."/>
            <person name="Wei C.L."/>
            <person name="Yagi K."/>
            <person name="Yamanishi H."/>
            <person name="Zabarovsky E."/>
            <person name="Zhu S."/>
            <person name="Zimmer A."/>
            <person name="Hide W."/>
            <person name="Bult C."/>
            <person name="Grimmond S.M."/>
            <person name="Teasdale R.D."/>
            <person name="Liu E.T."/>
            <person name="Brusic V."/>
            <person name="Quackenbush J."/>
            <person name="Wahlestedt C."/>
            <person name="Mattick J.S."/>
            <person name="Hume D.A."/>
            <person name="Kai C."/>
            <person name="Sasaki D."/>
            <person name="Tomaru Y."/>
            <person name="Fukuda S."/>
            <person name="Kanamori-Katayama M."/>
            <person name="Suzuki M."/>
            <person name="Aoki J."/>
            <person name="Arakawa T."/>
            <person name="Iida J."/>
            <person name="Imamura K."/>
            <person name="Itoh M."/>
            <person name="Kato T."/>
            <person name="Kawaji H."/>
            <person name="Kawagashira N."/>
            <person name="Kawashima T."/>
            <person name="Kojima M."/>
            <person name="Kondo S."/>
            <person name="Konno H."/>
            <person name="Nakano K."/>
            <person name="Ninomiya N."/>
            <person name="Nishio T."/>
            <person name="Okada M."/>
            <person name="Plessy C."/>
            <person name="Shibata K."/>
            <person name="Shiraki T."/>
            <person name="Suzuki S."/>
            <person name="Tagami M."/>
            <person name="Waki K."/>
            <person name="Watahiki A."/>
            <person name="Okamura-Oho Y."/>
            <person name="Suzuki H."/>
            <person name="Kawai J."/>
            <person name="Hayashizaki Y."/>
        </authorList>
    </citation>
    <scope>NUCLEOTIDE SEQUENCE [LARGE SCALE MRNA]</scope>
    <source>
        <strain>C57BL/6J</strain>
        <strain>NOD</strain>
        <tissue>Pituitary</tissue>
    </source>
</reference>
<reference key="2">
    <citation type="journal article" date="2004" name="Genome Res.">
        <title>The status, quality, and expansion of the NIH full-length cDNA project: the Mammalian Gene Collection (MGC).</title>
        <authorList>
            <consortium name="The MGC Project Team"/>
        </authorList>
    </citation>
    <scope>NUCLEOTIDE SEQUENCE [LARGE SCALE MRNA]</scope>
    <source>
        <tissue>Olfactory epithelium</tissue>
    </source>
</reference>
<reference key="3">
    <citation type="journal article" date="2010" name="Cell">
        <title>A tissue-specific atlas of mouse protein phosphorylation and expression.</title>
        <authorList>
            <person name="Huttlin E.L."/>
            <person name="Jedrychowski M.P."/>
            <person name="Elias J.E."/>
            <person name="Goswami T."/>
            <person name="Rad R."/>
            <person name="Beausoleil S.A."/>
            <person name="Villen J."/>
            <person name="Haas W."/>
            <person name="Sowa M.E."/>
            <person name="Gygi S.P."/>
        </authorList>
    </citation>
    <scope>IDENTIFICATION BY MASS SPECTROMETRY [LARGE SCALE ANALYSIS]</scope>
    <source>
        <tissue>Spleen</tissue>
    </source>
</reference>
<accession>Q8BSU7</accession>
<accession>Q3TBK2</accession>
<name>MOB3A_MOUSE</name>
<evidence type="ECO:0000250" key="1"/>
<evidence type="ECO:0000305" key="2"/>
<feature type="chain" id="PRO_0000193571" description="MOB kinase activator 3A">
    <location>
        <begin position="1"/>
        <end position="217"/>
    </location>
</feature>
<feature type="binding site" evidence="1">
    <location>
        <position position="83"/>
    </location>
    <ligand>
        <name>Zn(2+)</name>
        <dbReference type="ChEBI" id="CHEBI:29105"/>
    </ligand>
</feature>
<feature type="binding site" evidence="1">
    <location>
        <position position="88"/>
    </location>
    <ligand>
        <name>Zn(2+)</name>
        <dbReference type="ChEBI" id="CHEBI:29105"/>
    </ligand>
</feature>
<feature type="binding site" evidence="1">
    <location>
        <position position="165"/>
    </location>
    <ligand>
        <name>Zn(2+)</name>
        <dbReference type="ChEBI" id="CHEBI:29105"/>
    </ligand>
</feature>
<feature type="binding site" evidence="1">
    <location>
        <position position="170"/>
    </location>
    <ligand>
        <name>Zn(2+)</name>
        <dbReference type="ChEBI" id="CHEBI:29105"/>
    </ligand>
</feature>
<dbReference type="EMBL" id="AK030481">
    <property type="protein sequence ID" value="BAC26983.1"/>
    <property type="molecule type" value="mRNA"/>
</dbReference>
<dbReference type="EMBL" id="AK170394">
    <property type="protein sequence ID" value="BAE41766.1"/>
    <property type="molecule type" value="mRNA"/>
</dbReference>
<dbReference type="EMBL" id="AK171197">
    <property type="protein sequence ID" value="BAE42307.1"/>
    <property type="molecule type" value="mRNA"/>
</dbReference>
<dbReference type="EMBL" id="BC058238">
    <property type="protein sequence ID" value="AAH58238.1"/>
    <property type="molecule type" value="mRNA"/>
</dbReference>
<dbReference type="CCDS" id="CCDS35982.1"/>
<dbReference type="RefSeq" id="NP_766045.2">
    <property type="nucleotide sequence ID" value="NM_172457.2"/>
</dbReference>
<dbReference type="SMR" id="Q8BSU7"/>
<dbReference type="FunCoup" id="Q8BSU7">
    <property type="interactions" value="2978"/>
</dbReference>
<dbReference type="STRING" id="10090.ENSMUSP00000003438"/>
<dbReference type="iPTMnet" id="Q8BSU7"/>
<dbReference type="PhosphoSitePlus" id="Q8BSU7"/>
<dbReference type="PaxDb" id="10090-ENSMUSP00000003438"/>
<dbReference type="ProteomicsDB" id="295576"/>
<dbReference type="Pumba" id="Q8BSU7"/>
<dbReference type="Antibodypedia" id="42277">
    <property type="antibodies" value="59 antibodies from 20 providers"/>
</dbReference>
<dbReference type="DNASU" id="208228"/>
<dbReference type="Ensembl" id="ENSMUST00000003438.11">
    <property type="protein sequence ID" value="ENSMUSP00000003438.9"/>
    <property type="gene ID" value="ENSMUSG00000003348.11"/>
</dbReference>
<dbReference type="GeneID" id="208228"/>
<dbReference type="KEGG" id="mmu:208228"/>
<dbReference type="UCSC" id="uc007geh.1">
    <property type="organism name" value="mouse"/>
</dbReference>
<dbReference type="AGR" id="MGI:3050117"/>
<dbReference type="CTD" id="126308"/>
<dbReference type="MGI" id="MGI:3050117">
    <property type="gene designation" value="Mob3a"/>
</dbReference>
<dbReference type="VEuPathDB" id="HostDB:ENSMUSG00000003348"/>
<dbReference type="eggNOG" id="KOG1903">
    <property type="taxonomic scope" value="Eukaryota"/>
</dbReference>
<dbReference type="GeneTree" id="ENSGT01120000271863"/>
<dbReference type="HOGENOM" id="CLU_038321_3_0_1"/>
<dbReference type="InParanoid" id="Q8BSU7"/>
<dbReference type="OMA" id="HMGSEAH"/>
<dbReference type="OrthoDB" id="8170117at2759"/>
<dbReference type="PhylomeDB" id="Q8BSU7"/>
<dbReference type="TreeFam" id="TF300789"/>
<dbReference type="BioGRID-ORCS" id="208228">
    <property type="hits" value="1 hit in 77 CRISPR screens"/>
</dbReference>
<dbReference type="ChiTaRS" id="Mob3a">
    <property type="organism name" value="mouse"/>
</dbReference>
<dbReference type="PRO" id="PR:Q8BSU7"/>
<dbReference type="Proteomes" id="UP000000589">
    <property type="component" value="Chromosome 10"/>
</dbReference>
<dbReference type="RNAct" id="Q8BSU7">
    <property type="molecule type" value="protein"/>
</dbReference>
<dbReference type="Bgee" id="ENSMUSG00000003348">
    <property type="expression patterns" value="Expressed in granulocyte and 183 other cell types or tissues"/>
</dbReference>
<dbReference type="ExpressionAtlas" id="Q8BSU7">
    <property type="expression patterns" value="baseline and differential"/>
</dbReference>
<dbReference type="GO" id="GO:0046872">
    <property type="term" value="F:metal ion binding"/>
    <property type="evidence" value="ECO:0007669"/>
    <property type="project" value="UniProtKB-KW"/>
</dbReference>
<dbReference type="FunFam" id="1.20.140.30:FF:000001">
    <property type="entry name" value="MOB kinase activator 1A"/>
    <property type="match status" value="1"/>
</dbReference>
<dbReference type="Gene3D" id="1.20.140.30">
    <property type="entry name" value="MOB kinase activator"/>
    <property type="match status" value="1"/>
</dbReference>
<dbReference type="InterPro" id="IPR005301">
    <property type="entry name" value="MOB_kinase_act_fam"/>
</dbReference>
<dbReference type="InterPro" id="IPR036703">
    <property type="entry name" value="MOB_kinase_act_sf"/>
</dbReference>
<dbReference type="PANTHER" id="PTHR22599">
    <property type="entry name" value="MPS ONE BINDER KINASE ACTIVATOR-LIKE MOB"/>
    <property type="match status" value="1"/>
</dbReference>
<dbReference type="Pfam" id="PF03637">
    <property type="entry name" value="Mob1_phocein"/>
    <property type="match status" value="1"/>
</dbReference>
<dbReference type="SMART" id="SM01388">
    <property type="entry name" value="Mob1_phocein"/>
    <property type="match status" value="1"/>
</dbReference>
<dbReference type="SUPFAM" id="SSF101152">
    <property type="entry name" value="Mob1/phocein"/>
    <property type="match status" value="1"/>
</dbReference>
<proteinExistence type="evidence at protein level"/>